<protein>
    <recommendedName>
        <fullName>Serine/threonine-protein phosphatase PP2A catalytic subunit 3</fullName>
        <shortName>PPN 3</shortName>
        <ecNumber>3.1.3.16</ecNumber>
    </recommendedName>
</protein>
<name>PP2A3_PARTE</name>
<accession>Q6BFF6</accession>
<reference key="1">
    <citation type="journal article" date="2004" name="Curr. Biol.">
        <title>High coding density on the largest Paramecium tetraurelia somatic chromosome.</title>
        <authorList>
            <person name="Zagulski M."/>
            <person name="Nowak J.K."/>
            <person name="Le Mouel A."/>
            <person name="Nowacki M."/>
            <person name="Migdalski A."/>
            <person name="Gromadka R."/>
            <person name="Noel B."/>
            <person name="Blanc I."/>
            <person name="Dessen P."/>
            <person name="Wincker P."/>
            <person name="Keller A.-M."/>
            <person name="Cohen J."/>
            <person name="Meyer E."/>
            <person name="Sperling L."/>
        </authorList>
    </citation>
    <scope>NUCLEOTIDE SEQUENCE [LARGE SCALE GENOMIC DNA]</scope>
    <source>
        <strain>Stock d4-2</strain>
    </source>
</reference>
<reference key="2">
    <citation type="journal article" date="2006" name="Nature">
        <title>Global trends of whole-genome duplications revealed by the ciliate Paramecium tetraurelia.</title>
        <authorList>
            <person name="Aury J.-M."/>
            <person name="Jaillon O."/>
            <person name="Duret L."/>
            <person name="Noel B."/>
            <person name="Jubin C."/>
            <person name="Porcel B.M."/>
            <person name="Segurens B."/>
            <person name="Daubin V."/>
            <person name="Anthouard V."/>
            <person name="Aiach N."/>
            <person name="Arnaiz O."/>
            <person name="Billaut A."/>
            <person name="Beisson J."/>
            <person name="Blanc I."/>
            <person name="Bouhouche K."/>
            <person name="Camara F."/>
            <person name="Duharcourt S."/>
            <person name="Guigo R."/>
            <person name="Gogendeau D."/>
            <person name="Katinka M."/>
            <person name="Keller A.-M."/>
            <person name="Kissmehl R."/>
            <person name="Klotz C."/>
            <person name="Koll F."/>
            <person name="Le Mouel A."/>
            <person name="Lepere G."/>
            <person name="Malinsky S."/>
            <person name="Nowacki M."/>
            <person name="Nowak J.K."/>
            <person name="Plattner H."/>
            <person name="Poulain J."/>
            <person name="Ruiz F."/>
            <person name="Serrano V."/>
            <person name="Zagulski M."/>
            <person name="Dessen P."/>
            <person name="Betermier M."/>
            <person name="Weissenbach J."/>
            <person name="Scarpelli C."/>
            <person name="Schaechter V."/>
            <person name="Sperling L."/>
            <person name="Meyer E."/>
            <person name="Cohen J."/>
            <person name="Wincker P."/>
        </authorList>
    </citation>
    <scope>NUCLEOTIDE SEQUENCE [LARGE SCALE GENOMIC DNA]</scope>
    <source>
        <strain>Stock d4-2</strain>
    </source>
</reference>
<proteinExistence type="inferred from homology"/>
<keyword id="KW-0378">Hydrolase</keyword>
<keyword id="KW-0464">Manganese</keyword>
<keyword id="KW-0479">Metal-binding</keyword>
<keyword id="KW-0488">Methylation</keyword>
<keyword id="KW-0904">Protein phosphatase</keyword>
<keyword id="KW-1185">Reference proteome</keyword>
<feature type="chain" id="PRO_0000307836" description="Serine/threonine-protein phosphatase PP2A catalytic subunit 3">
    <location>
        <begin position="1"/>
        <end position="315"/>
    </location>
</feature>
<feature type="region of interest" description="Disordered" evidence="2">
    <location>
        <begin position="294"/>
        <end position="315"/>
    </location>
</feature>
<feature type="compositionally biased region" description="Basic and acidic residues" evidence="2">
    <location>
        <begin position="298"/>
        <end position="315"/>
    </location>
</feature>
<feature type="active site" description="Proton donor" evidence="1">
    <location>
        <position position="123"/>
    </location>
</feature>
<feature type="binding site" evidence="1">
    <location>
        <position position="62"/>
    </location>
    <ligand>
        <name>Mn(2+)</name>
        <dbReference type="ChEBI" id="CHEBI:29035"/>
        <label>1</label>
    </ligand>
</feature>
<feature type="binding site" evidence="1">
    <location>
        <position position="64"/>
    </location>
    <ligand>
        <name>Mn(2+)</name>
        <dbReference type="ChEBI" id="CHEBI:29035"/>
        <label>1</label>
    </ligand>
</feature>
<feature type="binding site" evidence="1">
    <location>
        <position position="90"/>
    </location>
    <ligand>
        <name>Mn(2+)</name>
        <dbReference type="ChEBI" id="CHEBI:29035"/>
        <label>1</label>
    </ligand>
</feature>
<feature type="binding site" evidence="1">
    <location>
        <position position="90"/>
    </location>
    <ligand>
        <name>Mn(2+)</name>
        <dbReference type="ChEBI" id="CHEBI:29035"/>
        <label>2</label>
    </ligand>
</feature>
<feature type="binding site" evidence="1">
    <location>
        <position position="122"/>
    </location>
    <ligand>
        <name>Mn(2+)</name>
        <dbReference type="ChEBI" id="CHEBI:29035"/>
        <label>2</label>
    </ligand>
</feature>
<feature type="binding site" evidence="1">
    <location>
        <position position="172"/>
    </location>
    <ligand>
        <name>Mn(2+)</name>
        <dbReference type="ChEBI" id="CHEBI:29035"/>
        <label>2</label>
    </ligand>
</feature>
<feature type="binding site" evidence="1">
    <location>
        <position position="247"/>
    </location>
    <ligand>
        <name>Mn(2+)</name>
        <dbReference type="ChEBI" id="CHEBI:29035"/>
        <label>2</label>
    </ligand>
</feature>
<feature type="modified residue" description="Leucine methyl ester" evidence="1">
    <location>
        <position position="315"/>
    </location>
</feature>
<organism>
    <name type="scientific">Paramecium tetraurelia</name>
    <dbReference type="NCBI Taxonomy" id="5888"/>
    <lineage>
        <taxon>Eukaryota</taxon>
        <taxon>Sar</taxon>
        <taxon>Alveolata</taxon>
        <taxon>Ciliophora</taxon>
        <taxon>Intramacronucleata</taxon>
        <taxon>Oligohymenophorea</taxon>
        <taxon>Peniculida</taxon>
        <taxon>Parameciidae</taxon>
        <taxon>Paramecium</taxon>
    </lineage>
</organism>
<sequence length="315" mass="36080">MASLNKLSSNDIGNIDRQIAKLKQGQILTESEIKSLCIKAKEILSDEPNIIQVRAPLTICGDIHGQFHDLIELFQIGGNLPDTNYLFLGDYVDRGSQSVETFSLMLSLKVRYKDRIVLLRGNHENREINKVYGFYDECFRKYGNEIVWKQFTEVFGYLPLSAIVEQQIFCAHGGLSPAMESVDQIKQLNRVQDIPHEGLMCDLLWSDPEETKNGWGISPRGAGWTWGCDITEKFLHSNKLKQIARAHQLVMEGIQKVHNQKTITIFSAPNYCYRCGNQACIVEVDEQLRMNQTQFEPAPRENEPHTTRRVPDYFL</sequence>
<gene>
    <name type="primary">Ppn3</name>
    <name type="ORF">GSPATT00000061001</name>
    <name type="ORF">PTMB.417c</name>
</gene>
<dbReference type="EC" id="3.1.3.16"/>
<dbReference type="EMBL" id="CR548612">
    <property type="protein sequence ID" value="CAH03615.1"/>
    <property type="molecule type" value="Genomic_DNA"/>
</dbReference>
<dbReference type="EMBL" id="CT867985">
    <property type="protein sequence ID" value="CAK55626.1"/>
    <property type="molecule type" value="Genomic_DNA"/>
</dbReference>
<dbReference type="RefSeq" id="XP_001347241.1">
    <property type="nucleotide sequence ID" value="XM_001347205.1"/>
</dbReference>
<dbReference type="RefSeq" id="XP_001423024.1">
    <property type="nucleotide sequence ID" value="XM_001422987.1"/>
</dbReference>
<dbReference type="SMR" id="Q6BFF6"/>
<dbReference type="STRING" id="5888.Q6BFF6"/>
<dbReference type="EnsemblProtists" id="CAK55626">
    <property type="protein sequence ID" value="CAK55626"/>
    <property type="gene ID" value="GSPATT00000061001"/>
</dbReference>
<dbReference type="GeneID" id="5008828"/>
<dbReference type="GeneID" id="79574108"/>
<dbReference type="KEGG" id="ptm:GSPATT00000061001"/>
<dbReference type="KEGG" id="ptm:PTMB.417c"/>
<dbReference type="eggNOG" id="KOG0371">
    <property type="taxonomic scope" value="Eukaryota"/>
</dbReference>
<dbReference type="HOGENOM" id="CLU_004962_8_1_1"/>
<dbReference type="InParanoid" id="Q6BFF6"/>
<dbReference type="OMA" id="EDQIGWS"/>
<dbReference type="OrthoDB" id="282434at2759"/>
<dbReference type="Proteomes" id="UP000000600">
    <property type="component" value="Chromosome"/>
</dbReference>
<dbReference type="Proteomes" id="UP000000600">
    <property type="component" value="Partially assembled WGS sequence"/>
</dbReference>
<dbReference type="GO" id="GO:0005829">
    <property type="term" value="C:cytosol"/>
    <property type="evidence" value="ECO:0000318"/>
    <property type="project" value="GO_Central"/>
</dbReference>
<dbReference type="GO" id="GO:0005634">
    <property type="term" value="C:nucleus"/>
    <property type="evidence" value="ECO:0000318"/>
    <property type="project" value="GO_Central"/>
</dbReference>
<dbReference type="GO" id="GO:0046872">
    <property type="term" value="F:metal ion binding"/>
    <property type="evidence" value="ECO:0007669"/>
    <property type="project" value="UniProtKB-KW"/>
</dbReference>
<dbReference type="GO" id="GO:0004722">
    <property type="term" value="F:protein serine/threonine phosphatase activity"/>
    <property type="evidence" value="ECO:0000318"/>
    <property type="project" value="GO_Central"/>
</dbReference>
<dbReference type="GO" id="GO:0000278">
    <property type="term" value="P:mitotic cell cycle"/>
    <property type="evidence" value="ECO:0000318"/>
    <property type="project" value="GO_Central"/>
</dbReference>
<dbReference type="CDD" id="cd07415">
    <property type="entry name" value="MPP_PP2A_PP4_PP6"/>
    <property type="match status" value="1"/>
</dbReference>
<dbReference type="Gene3D" id="3.60.21.10">
    <property type="match status" value="1"/>
</dbReference>
<dbReference type="InterPro" id="IPR004843">
    <property type="entry name" value="Calcineurin-like_PHP_ApaH"/>
</dbReference>
<dbReference type="InterPro" id="IPR029052">
    <property type="entry name" value="Metallo-depent_PP-like"/>
</dbReference>
<dbReference type="InterPro" id="IPR047129">
    <property type="entry name" value="PPA2-like"/>
</dbReference>
<dbReference type="InterPro" id="IPR006186">
    <property type="entry name" value="Ser/Thr-sp_prot-phosphatase"/>
</dbReference>
<dbReference type="PANTHER" id="PTHR45619">
    <property type="entry name" value="SERINE/THREONINE-PROTEIN PHOSPHATASE PP2A-RELATED"/>
    <property type="match status" value="1"/>
</dbReference>
<dbReference type="Pfam" id="PF00149">
    <property type="entry name" value="Metallophos"/>
    <property type="match status" value="1"/>
</dbReference>
<dbReference type="PRINTS" id="PR00114">
    <property type="entry name" value="STPHPHTASE"/>
</dbReference>
<dbReference type="SMART" id="SM00156">
    <property type="entry name" value="PP2Ac"/>
    <property type="match status" value="1"/>
</dbReference>
<dbReference type="SUPFAM" id="SSF56300">
    <property type="entry name" value="Metallo-dependent phosphatases"/>
    <property type="match status" value="1"/>
</dbReference>
<dbReference type="PROSITE" id="PS00125">
    <property type="entry name" value="SER_THR_PHOSPHATASE"/>
    <property type="match status" value="1"/>
</dbReference>
<comment type="catalytic activity">
    <reaction>
        <text>O-phospho-L-seryl-[protein] + H2O = L-seryl-[protein] + phosphate</text>
        <dbReference type="Rhea" id="RHEA:20629"/>
        <dbReference type="Rhea" id="RHEA-COMP:9863"/>
        <dbReference type="Rhea" id="RHEA-COMP:11604"/>
        <dbReference type="ChEBI" id="CHEBI:15377"/>
        <dbReference type="ChEBI" id="CHEBI:29999"/>
        <dbReference type="ChEBI" id="CHEBI:43474"/>
        <dbReference type="ChEBI" id="CHEBI:83421"/>
        <dbReference type="EC" id="3.1.3.16"/>
    </reaction>
</comment>
<comment type="catalytic activity">
    <reaction>
        <text>O-phospho-L-threonyl-[protein] + H2O = L-threonyl-[protein] + phosphate</text>
        <dbReference type="Rhea" id="RHEA:47004"/>
        <dbReference type="Rhea" id="RHEA-COMP:11060"/>
        <dbReference type="Rhea" id="RHEA-COMP:11605"/>
        <dbReference type="ChEBI" id="CHEBI:15377"/>
        <dbReference type="ChEBI" id="CHEBI:30013"/>
        <dbReference type="ChEBI" id="CHEBI:43474"/>
        <dbReference type="ChEBI" id="CHEBI:61977"/>
        <dbReference type="EC" id="3.1.3.16"/>
    </reaction>
</comment>
<comment type="cofactor">
    <cofactor evidence="1">
        <name>Mn(2+)</name>
        <dbReference type="ChEBI" id="CHEBI:29035"/>
    </cofactor>
    <text evidence="1">Binds 2 manganese ions per subunit.</text>
</comment>
<comment type="PTM">
    <text>Reversibly methyl esterified on Leu-315 by leucine carboxyl methyltransferase 1 (PPM1) and protein phosphatase methylesterase 1 (PPE1). Carboxyl methylation influences the affinity of the catalytic subunit for the different regulatory subunits, thereby modulating the PP2A holoenzyme's substrate specificity, enzyme activity and cellular localization.</text>
</comment>
<comment type="similarity">
    <text evidence="3">Belongs to the PPP phosphatase family. PP-2A subfamily.</text>
</comment>
<evidence type="ECO:0000250" key="1"/>
<evidence type="ECO:0000256" key="2">
    <source>
        <dbReference type="SAM" id="MobiDB-lite"/>
    </source>
</evidence>
<evidence type="ECO:0000305" key="3"/>